<gene>
    <name evidence="1" type="primary">infA</name>
    <name type="ordered locus">Shewmr7_1724</name>
</gene>
<reference key="1">
    <citation type="submission" date="2006-08" db="EMBL/GenBank/DDBJ databases">
        <title>Complete sequence of chromosome 1 of Shewanella sp. MR-7.</title>
        <authorList>
            <person name="Copeland A."/>
            <person name="Lucas S."/>
            <person name="Lapidus A."/>
            <person name="Barry K."/>
            <person name="Detter J.C."/>
            <person name="Glavina del Rio T."/>
            <person name="Hammon N."/>
            <person name="Israni S."/>
            <person name="Dalin E."/>
            <person name="Tice H."/>
            <person name="Pitluck S."/>
            <person name="Kiss H."/>
            <person name="Brettin T."/>
            <person name="Bruce D."/>
            <person name="Han C."/>
            <person name="Tapia R."/>
            <person name="Gilna P."/>
            <person name="Schmutz J."/>
            <person name="Larimer F."/>
            <person name="Land M."/>
            <person name="Hauser L."/>
            <person name="Kyrpides N."/>
            <person name="Mikhailova N."/>
            <person name="Nealson K."/>
            <person name="Konstantinidis K."/>
            <person name="Klappenbach J."/>
            <person name="Tiedje J."/>
            <person name="Richardson P."/>
        </authorList>
    </citation>
    <scope>NUCLEOTIDE SEQUENCE [LARGE SCALE GENOMIC DNA]</scope>
    <source>
        <strain>MR-7</strain>
    </source>
</reference>
<organism>
    <name type="scientific">Shewanella sp. (strain MR-7)</name>
    <dbReference type="NCBI Taxonomy" id="60481"/>
    <lineage>
        <taxon>Bacteria</taxon>
        <taxon>Pseudomonadati</taxon>
        <taxon>Pseudomonadota</taxon>
        <taxon>Gammaproteobacteria</taxon>
        <taxon>Alteromonadales</taxon>
        <taxon>Shewanellaceae</taxon>
        <taxon>Shewanella</taxon>
    </lineage>
</organism>
<comment type="function">
    <text evidence="1">One of the essential components for the initiation of protein synthesis. Stabilizes the binding of IF-2 and IF-3 on the 30S subunit to which N-formylmethionyl-tRNA(fMet) subsequently binds. Helps modulate mRNA selection, yielding the 30S pre-initiation complex (PIC). Upon addition of the 50S ribosomal subunit IF-1, IF-2 and IF-3 are released leaving the mature 70S translation initiation complex.</text>
</comment>
<comment type="subunit">
    <text evidence="1">Component of the 30S ribosomal translation pre-initiation complex which assembles on the 30S ribosome in the order IF-2 and IF-3, IF-1 and N-formylmethionyl-tRNA(fMet); mRNA recruitment can occur at any time during PIC assembly.</text>
</comment>
<comment type="subcellular location">
    <subcellularLocation>
        <location evidence="1">Cytoplasm</location>
    </subcellularLocation>
</comment>
<comment type="similarity">
    <text evidence="1">Belongs to the IF-1 family.</text>
</comment>
<name>IF1_SHESR</name>
<protein>
    <recommendedName>
        <fullName evidence="1">Translation initiation factor IF-1</fullName>
    </recommendedName>
</protein>
<evidence type="ECO:0000255" key="1">
    <source>
        <dbReference type="HAMAP-Rule" id="MF_00075"/>
    </source>
</evidence>
<feature type="chain" id="PRO_0000263869" description="Translation initiation factor IF-1">
    <location>
        <begin position="1"/>
        <end position="72"/>
    </location>
</feature>
<feature type="domain" description="S1-like" evidence="1">
    <location>
        <begin position="1"/>
        <end position="72"/>
    </location>
</feature>
<accession>Q0HVY8</accession>
<sequence>MAKEDNIEMQGTILETLPNTMFRVELENGHVVIAHISGKMRKNYIRILTGDKVTVQLTPYDLTKGRIVFRAR</sequence>
<proteinExistence type="inferred from homology"/>
<dbReference type="EMBL" id="CP000444">
    <property type="protein sequence ID" value="ABI42717.1"/>
    <property type="molecule type" value="Genomic_DNA"/>
</dbReference>
<dbReference type="SMR" id="Q0HVY8"/>
<dbReference type="KEGG" id="shm:Shewmr7_1724"/>
<dbReference type="HOGENOM" id="CLU_151267_1_0_6"/>
<dbReference type="GO" id="GO:0005829">
    <property type="term" value="C:cytosol"/>
    <property type="evidence" value="ECO:0007669"/>
    <property type="project" value="TreeGrafter"/>
</dbReference>
<dbReference type="GO" id="GO:0043022">
    <property type="term" value="F:ribosome binding"/>
    <property type="evidence" value="ECO:0007669"/>
    <property type="project" value="UniProtKB-UniRule"/>
</dbReference>
<dbReference type="GO" id="GO:0019843">
    <property type="term" value="F:rRNA binding"/>
    <property type="evidence" value="ECO:0007669"/>
    <property type="project" value="UniProtKB-UniRule"/>
</dbReference>
<dbReference type="GO" id="GO:0003743">
    <property type="term" value="F:translation initiation factor activity"/>
    <property type="evidence" value="ECO:0007669"/>
    <property type="project" value="UniProtKB-UniRule"/>
</dbReference>
<dbReference type="CDD" id="cd04451">
    <property type="entry name" value="S1_IF1"/>
    <property type="match status" value="1"/>
</dbReference>
<dbReference type="FunFam" id="2.40.50.140:FF:000002">
    <property type="entry name" value="Translation initiation factor IF-1"/>
    <property type="match status" value="1"/>
</dbReference>
<dbReference type="Gene3D" id="2.40.50.140">
    <property type="entry name" value="Nucleic acid-binding proteins"/>
    <property type="match status" value="1"/>
</dbReference>
<dbReference type="HAMAP" id="MF_00075">
    <property type="entry name" value="IF_1"/>
    <property type="match status" value="1"/>
</dbReference>
<dbReference type="InterPro" id="IPR012340">
    <property type="entry name" value="NA-bd_OB-fold"/>
</dbReference>
<dbReference type="InterPro" id="IPR006196">
    <property type="entry name" value="RNA-binding_domain_S1_IF1"/>
</dbReference>
<dbReference type="InterPro" id="IPR003029">
    <property type="entry name" value="S1_domain"/>
</dbReference>
<dbReference type="InterPro" id="IPR004368">
    <property type="entry name" value="TIF_IF1"/>
</dbReference>
<dbReference type="NCBIfam" id="TIGR00008">
    <property type="entry name" value="infA"/>
    <property type="match status" value="1"/>
</dbReference>
<dbReference type="PANTHER" id="PTHR33370">
    <property type="entry name" value="TRANSLATION INITIATION FACTOR IF-1, CHLOROPLASTIC"/>
    <property type="match status" value="1"/>
</dbReference>
<dbReference type="PANTHER" id="PTHR33370:SF1">
    <property type="entry name" value="TRANSLATION INITIATION FACTOR IF-1, CHLOROPLASTIC"/>
    <property type="match status" value="1"/>
</dbReference>
<dbReference type="Pfam" id="PF01176">
    <property type="entry name" value="eIF-1a"/>
    <property type="match status" value="1"/>
</dbReference>
<dbReference type="SMART" id="SM00316">
    <property type="entry name" value="S1"/>
    <property type="match status" value="1"/>
</dbReference>
<dbReference type="SUPFAM" id="SSF50249">
    <property type="entry name" value="Nucleic acid-binding proteins"/>
    <property type="match status" value="1"/>
</dbReference>
<dbReference type="PROSITE" id="PS50832">
    <property type="entry name" value="S1_IF1_TYPE"/>
    <property type="match status" value="1"/>
</dbReference>
<keyword id="KW-0963">Cytoplasm</keyword>
<keyword id="KW-0396">Initiation factor</keyword>
<keyword id="KW-0648">Protein biosynthesis</keyword>
<keyword id="KW-0694">RNA-binding</keyword>
<keyword id="KW-0699">rRNA-binding</keyword>